<organism>
    <name type="scientific">Enterobacteria phage fr</name>
    <name type="common">Bacteriophage fr</name>
    <dbReference type="NCBI Taxonomy" id="12017"/>
    <lineage>
        <taxon>Viruses</taxon>
        <taxon>Riboviria</taxon>
        <taxon>Orthornavirae</taxon>
        <taxon>Lenarviricota</taxon>
        <taxon>Leviviricetes</taxon>
        <taxon>Norzivirales</taxon>
        <taxon>Fiersviridae</taxon>
        <taxon>Emesvirus</taxon>
        <taxon>Emesvirus zinderi</taxon>
    </lineage>
</organism>
<reference key="1">
    <citation type="journal article" date="1990" name="Biochim. Biophys. Acta">
        <title>Complete nucleotide sequence of the group I RNA bacteriophage fr.</title>
        <authorList>
            <person name="Adhin M.R."/>
            <person name="Avots A.J."/>
            <person name="Berzin V.M."/>
            <person name="Overbeek G.P."/>
            <person name="van Duin J."/>
        </authorList>
    </citation>
    <scope>NUCLEOTIDE SEQUENCE [MRNA]</scope>
</reference>
<reference key="2">
    <citation type="journal article" date="1987" name="Nucleic Acids Res.">
        <title>Sequence of the genes coding for the A-protein and coat protein of bacteriophage fr.</title>
        <authorList>
            <person name="Berzin V.M."/>
            <person name="Avots A.J."/>
            <person name="Jansone I.V."/>
            <person name="Gintnere L."/>
            <person name="Tsimanis A.J."/>
        </authorList>
    </citation>
    <scope>NUCLEOTIDE SEQUENCE [MRNA] OF 1-11</scope>
</reference>
<reference key="3">
    <citation type="journal article" date="1981" name="Bioorg. Khim.">
        <title>Structure of regulator part of phage fr replicase gene.</title>
        <authorList>
            <person name="Berzin V.M."/>
            <person name="Gribanov V.A."/>
            <person name="Cielens I.E."/>
            <person name="Jansone I.V."/>
            <person name="Gren E.J."/>
        </authorList>
    </citation>
    <scope>NUCLEOTIDE SEQUENCE OF 1-11</scope>
</reference>
<accession>P15965</accession>
<dbReference type="EC" id="2.7.7.48" evidence="1"/>
<dbReference type="EMBL" id="X15031">
    <property type="protein sequence ID" value="CAA33138.1"/>
    <property type="molecule type" value="mRNA"/>
</dbReference>
<dbReference type="EMBL" id="M31635">
    <property type="protein sequence ID" value="AAA32190.1"/>
    <property type="molecule type" value="Genomic_RNA"/>
</dbReference>
<dbReference type="EMBL" id="M35063">
    <property type="protein sequence ID" value="AAA32191.1"/>
    <property type="molecule type" value="Genomic_RNA"/>
</dbReference>
<dbReference type="EMBL" id="M38325">
    <property type="protein sequence ID" value="AAA32192.1"/>
    <property type="molecule type" value="Genomic_RNA"/>
</dbReference>
<dbReference type="PIR" id="S08020">
    <property type="entry name" value="S08020"/>
</dbReference>
<dbReference type="SMR" id="P15965"/>
<dbReference type="Proteomes" id="UP000002582">
    <property type="component" value="Genome"/>
</dbReference>
<dbReference type="GO" id="GO:0000166">
    <property type="term" value="F:nucleotide binding"/>
    <property type="evidence" value="ECO:0007669"/>
    <property type="project" value="UniProtKB-KW"/>
</dbReference>
<dbReference type="GO" id="GO:0003968">
    <property type="term" value="F:RNA-directed RNA polymerase activity"/>
    <property type="evidence" value="ECO:0007669"/>
    <property type="project" value="UniProtKB-KW"/>
</dbReference>
<dbReference type="GO" id="GO:0039694">
    <property type="term" value="P:viral RNA genome replication"/>
    <property type="evidence" value="ECO:0007669"/>
    <property type="project" value="InterPro"/>
</dbReference>
<dbReference type="InterPro" id="IPR043502">
    <property type="entry name" value="DNA/RNA_pol_sf"/>
</dbReference>
<dbReference type="InterPro" id="IPR007096">
    <property type="entry name" value="RNA-dir_Rpol_cat_phage"/>
</dbReference>
<dbReference type="InterPro" id="IPR005093">
    <property type="entry name" value="RNArep_beta"/>
</dbReference>
<dbReference type="Pfam" id="PF03431">
    <property type="entry name" value="RNA_replicase_B"/>
    <property type="match status" value="1"/>
</dbReference>
<dbReference type="SUPFAM" id="SSF56672">
    <property type="entry name" value="DNA/RNA polymerases"/>
    <property type="match status" value="1"/>
</dbReference>
<dbReference type="PROSITE" id="PS50522">
    <property type="entry name" value="RDRP_PHAGE"/>
    <property type="match status" value="1"/>
</dbReference>
<keyword id="KW-0547">Nucleotide-binding</keyword>
<keyword id="KW-0548">Nucleotidyltransferase</keyword>
<keyword id="KW-0696">RNA-directed RNA polymerase</keyword>
<keyword id="KW-0808">Transferase</keyword>
<keyword id="KW-0693">Viral RNA replication</keyword>
<evidence type="ECO:0000250" key="1">
    <source>
        <dbReference type="UniProtKB" id="P00585"/>
    </source>
</evidence>
<evidence type="ECO:0000255" key="2">
    <source>
        <dbReference type="PROSITE-ProRule" id="PRU00539"/>
    </source>
</evidence>
<comment type="function">
    <text evidence="1">This is the catalytic subunit of the viral RNA-dependent RNA polymerase complex. This complex is involved in viral RNA replication that produces (+)-stranded genomes via a complementary, (-)-stranded intermediate.</text>
</comment>
<comment type="catalytic activity">
    <reaction evidence="1 2">
        <text>RNA(n) + a ribonucleoside 5'-triphosphate = RNA(n+1) + diphosphate</text>
        <dbReference type="Rhea" id="RHEA:21248"/>
        <dbReference type="Rhea" id="RHEA-COMP:14527"/>
        <dbReference type="Rhea" id="RHEA-COMP:17342"/>
        <dbReference type="ChEBI" id="CHEBI:33019"/>
        <dbReference type="ChEBI" id="CHEBI:61557"/>
        <dbReference type="ChEBI" id="CHEBI:140395"/>
        <dbReference type="EC" id="2.7.7.48"/>
    </reaction>
</comment>
<comment type="subunit">
    <text evidence="1">Part of the viral RNA-dependent RNA polymerase complex, the other subunits are probably the host ribosomal protein S1, EF-Tu and EF-Ts.</text>
</comment>
<name>RDRP_BPFR</name>
<protein>
    <recommendedName>
        <fullName>RNA-directed RNA polymerase beta chain</fullName>
        <ecNumber evidence="1">2.7.7.48</ecNumber>
    </recommendedName>
    <alternativeName>
        <fullName>RNA replicase beta chain</fullName>
    </alternativeName>
</protein>
<proteinExistence type="evidence at transcript level"/>
<feature type="chain" id="PRO_0000164851" description="RNA-directed RNA polymerase beta chain">
    <location>
        <begin position="1"/>
        <end position="545"/>
    </location>
</feature>
<feature type="domain" description="RdRp catalytic" evidence="2">
    <location>
        <begin position="243"/>
        <end position="373"/>
    </location>
</feature>
<organismHost>
    <name type="scientific">Escherichia coli</name>
    <dbReference type="NCBI Taxonomy" id="562"/>
</organismHost>
<sequence>MSKSTKKFNSLCIDLSRDLSLEVYQSIASVATGSSDPHSDDFTAIAYLRDELLTKHPNLGDGNDEATRRSLAIAKLLEANDRCGQINRDGFLHDATASWDPDVLQTSIRSLIGNLLSGYSSQLFRHCTFSNGASMGHKLQDAAPYKKFAEQATVTPRALKAAVLVKDQCSPWIRHSHVFPESYTFRLVGGNGVFTVPKNNKIDRAACKEPDMNMYLQKGVGGFIRRRLKTVGIDLNDQTINQRLAQQGSRDGSLATIDLSSASDSISDRLVWSFLPPELYSYLDMIRSHYGYVNGKMIRWELFSTMGNGFTFELESMIFWAIVRATQIHFRNTGTIGIYGDDIICPTEIAPRVLEALSFYGFKPNLRKTFTSGSFRESCGAHYFRGVDVKPFYIKKPITDLFSLMLILNRIRGWGVVNGIADPRLYEVWEKLSRLVPRYLFGGTDLQADYYVVSPPILKGIYSKMNGRREYAEARTTGFKLARIARWRKHFSDKHDSGRYIAWFHTGGEITDSMKSAGVRVMRTSEWLQPVPVFPQECGPASSPQ</sequence>